<protein>
    <recommendedName>
        <fullName evidence="1">Small ribosomal subunit protein uS5</fullName>
    </recommendedName>
    <alternativeName>
        <fullName evidence="2">30S ribosomal protein S5</fullName>
    </alternativeName>
</protein>
<sequence>MAKQDVQNGEFLEKLIAVNRVSKVVKGGRIFSFTALTVVGDGNGRVGFGYGKAREVPAAIQKAMEKARRNMVDVDLNGHTLQHPIKGRHSGSKVYMQPASEGTGIIAGGAMRAVLEVAGVQNVLSKCYGSTNPINVVRATINALTEMNSPAKVAAKRGLSVEEILG</sequence>
<reference key="1">
    <citation type="journal article" date="2008" name="ISME J.">
        <title>Comparative genomics of two ecotypes of the marine planktonic copiotroph Alteromonas macleodii suggests alternative lifestyles associated with different kinds of particulate organic matter.</title>
        <authorList>
            <person name="Ivars-Martinez E."/>
            <person name="Martin-Cuadrado A.-B."/>
            <person name="D'Auria G."/>
            <person name="Mira A."/>
            <person name="Ferriera S."/>
            <person name="Johnson J."/>
            <person name="Friedman R."/>
            <person name="Rodriguez-Valera F."/>
        </authorList>
    </citation>
    <scope>NUCLEOTIDE SEQUENCE [LARGE SCALE GENOMIC DNA]</scope>
    <source>
        <strain>DSM 17117 / CIP 110805 / LMG 28347 / Deep ecotype</strain>
    </source>
</reference>
<feature type="chain" id="PRO_1000140834" description="Small ribosomal subunit protein uS5">
    <location>
        <begin position="1"/>
        <end position="166"/>
    </location>
</feature>
<feature type="domain" description="S5 DRBM" evidence="1">
    <location>
        <begin position="11"/>
        <end position="74"/>
    </location>
</feature>
<organism>
    <name type="scientific">Alteromonas mediterranea (strain DSM 17117 / CIP 110805 / LMG 28347 / Deep ecotype)</name>
    <dbReference type="NCBI Taxonomy" id="1774373"/>
    <lineage>
        <taxon>Bacteria</taxon>
        <taxon>Pseudomonadati</taxon>
        <taxon>Pseudomonadota</taxon>
        <taxon>Gammaproteobacteria</taxon>
        <taxon>Alteromonadales</taxon>
        <taxon>Alteromonadaceae</taxon>
        <taxon>Alteromonas/Salinimonas group</taxon>
        <taxon>Alteromonas</taxon>
    </lineage>
</organism>
<accession>B4RT45</accession>
<accession>F2GAJ5</accession>
<gene>
    <name evidence="1" type="primary">rpsE</name>
    <name type="ordered locus">MADE_1013975</name>
</gene>
<name>RS5_ALTMD</name>
<comment type="function">
    <text evidence="1">With S4 and S12 plays an important role in translational accuracy.</text>
</comment>
<comment type="function">
    <text evidence="1">Located at the back of the 30S subunit body where it stabilizes the conformation of the head with respect to the body.</text>
</comment>
<comment type="subunit">
    <text evidence="1">Part of the 30S ribosomal subunit. Contacts proteins S4 and S8.</text>
</comment>
<comment type="domain">
    <text>The N-terminal domain interacts with the head of the 30S subunit; the C-terminal domain interacts with the body and contacts protein S4. The interaction surface between S4 and S5 is involved in control of translational fidelity.</text>
</comment>
<comment type="similarity">
    <text evidence="1">Belongs to the universal ribosomal protein uS5 family.</text>
</comment>
<proteinExistence type="inferred from homology"/>
<keyword id="KW-0687">Ribonucleoprotein</keyword>
<keyword id="KW-0689">Ribosomal protein</keyword>
<keyword id="KW-0694">RNA-binding</keyword>
<keyword id="KW-0699">rRNA-binding</keyword>
<evidence type="ECO:0000255" key="1">
    <source>
        <dbReference type="HAMAP-Rule" id="MF_01307"/>
    </source>
</evidence>
<evidence type="ECO:0000305" key="2"/>
<dbReference type="EMBL" id="CP001103">
    <property type="protein sequence ID" value="AEA98929.1"/>
    <property type="molecule type" value="Genomic_DNA"/>
</dbReference>
<dbReference type="RefSeq" id="WP_012519221.1">
    <property type="nucleotide sequence ID" value="NC_011138.3"/>
</dbReference>
<dbReference type="SMR" id="B4RT45"/>
<dbReference type="GeneID" id="78256525"/>
<dbReference type="KEGG" id="amc:MADE_1013975"/>
<dbReference type="HOGENOM" id="CLU_065898_2_2_6"/>
<dbReference type="Proteomes" id="UP000001870">
    <property type="component" value="Chromosome"/>
</dbReference>
<dbReference type="GO" id="GO:0015935">
    <property type="term" value="C:small ribosomal subunit"/>
    <property type="evidence" value="ECO:0007669"/>
    <property type="project" value="InterPro"/>
</dbReference>
<dbReference type="GO" id="GO:0019843">
    <property type="term" value="F:rRNA binding"/>
    <property type="evidence" value="ECO:0007669"/>
    <property type="project" value="UniProtKB-UniRule"/>
</dbReference>
<dbReference type="GO" id="GO:0003735">
    <property type="term" value="F:structural constituent of ribosome"/>
    <property type="evidence" value="ECO:0007669"/>
    <property type="project" value="InterPro"/>
</dbReference>
<dbReference type="GO" id="GO:0006412">
    <property type="term" value="P:translation"/>
    <property type="evidence" value="ECO:0007669"/>
    <property type="project" value="UniProtKB-UniRule"/>
</dbReference>
<dbReference type="FunFam" id="3.30.160.20:FF:000001">
    <property type="entry name" value="30S ribosomal protein S5"/>
    <property type="match status" value="1"/>
</dbReference>
<dbReference type="FunFam" id="3.30.230.10:FF:000002">
    <property type="entry name" value="30S ribosomal protein S5"/>
    <property type="match status" value="1"/>
</dbReference>
<dbReference type="Gene3D" id="3.30.160.20">
    <property type="match status" value="1"/>
</dbReference>
<dbReference type="Gene3D" id="3.30.230.10">
    <property type="match status" value="1"/>
</dbReference>
<dbReference type="HAMAP" id="MF_01307_B">
    <property type="entry name" value="Ribosomal_uS5_B"/>
    <property type="match status" value="1"/>
</dbReference>
<dbReference type="InterPro" id="IPR020568">
    <property type="entry name" value="Ribosomal_Su5_D2-typ_SF"/>
</dbReference>
<dbReference type="InterPro" id="IPR000851">
    <property type="entry name" value="Ribosomal_uS5"/>
</dbReference>
<dbReference type="InterPro" id="IPR005712">
    <property type="entry name" value="Ribosomal_uS5_bac-type"/>
</dbReference>
<dbReference type="InterPro" id="IPR005324">
    <property type="entry name" value="Ribosomal_uS5_C"/>
</dbReference>
<dbReference type="InterPro" id="IPR013810">
    <property type="entry name" value="Ribosomal_uS5_N"/>
</dbReference>
<dbReference type="InterPro" id="IPR018192">
    <property type="entry name" value="Ribosomal_uS5_N_CS"/>
</dbReference>
<dbReference type="InterPro" id="IPR014721">
    <property type="entry name" value="Ribsml_uS5_D2-typ_fold_subgr"/>
</dbReference>
<dbReference type="NCBIfam" id="TIGR01021">
    <property type="entry name" value="rpsE_bact"/>
    <property type="match status" value="1"/>
</dbReference>
<dbReference type="PANTHER" id="PTHR48277">
    <property type="entry name" value="MITOCHONDRIAL RIBOSOMAL PROTEIN S5"/>
    <property type="match status" value="1"/>
</dbReference>
<dbReference type="PANTHER" id="PTHR48277:SF1">
    <property type="entry name" value="MITOCHONDRIAL RIBOSOMAL PROTEIN S5"/>
    <property type="match status" value="1"/>
</dbReference>
<dbReference type="Pfam" id="PF00333">
    <property type="entry name" value="Ribosomal_S5"/>
    <property type="match status" value="1"/>
</dbReference>
<dbReference type="Pfam" id="PF03719">
    <property type="entry name" value="Ribosomal_S5_C"/>
    <property type="match status" value="1"/>
</dbReference>
<dbReference type="SUPFAM" id="SSF54768">
    <property type="entry name" value="dsRNA-binding domain-like"/>
    <property type="match status" value="1"/>
</dbReference>
<dbReference type="SUPFAM" id="SSF54211">
    <property type="entry name" value="Ribosomal protein S5 domain 2-like"/>
    <property type="match status" value="1"/>
</dbReference>
<dbReference type="PROSITE" id="PS00585">
    <property type="entry name" value="RIBOSOMAL_S5"/>
    <property type="match status" value="1"/>
</dbReference>
<dbReference type="PROSITE" id="PS50881">
    <property type="entry name" value="S5_DSRBD"/>
    <property type="match status" value="1"/>
</dbReference>